<accession>Q94KD3</accession>
<accession>Q56WP0</accession>
<accession>Q68EC6</accession>
<accession>Q9FVV3</accession>
<organism>
    <name type="scientific">Arabidopsis thaliana</name>
    <name type="common">Mouse-ear cress</name>
    <dbReference type="NCBI Taxonomy" id="3702"/>
    <lineage>
        <taxon>Eukaryota</taxon>
        <taxon>Viridiplantae</taxon>
        <taxon>Streptophyta</taxon>
        <taxon>Embryophyta</taxon>
        <taxon>Tracheophyta</taxon>
        <taxon>Spermatophyta</taxon>
        <taxon>Magnoliopsida</taxon>
        <taxon>eudicotyledons</taxon>
        <taxon>Gunneridae</taxon>
        <taxon>Pentapetalae</taxon>
        <taxon>rosids</taxon>
        <taxon>malvids</taxon>
        <taxon>Brassicales</taxon>
        <taxon>Brassicaceae</taxon>
        <taxon>Camelineae</taxon>
        <taxon>Arabidopsis</taxon>
    </lineage>
</organism>
<gene>
    <name type="primary">VPS52</name>
    <name type="synonym">POK</name>
    <name type="synonym">TTD8</name>
    <name type="ordered locus">At1g71270</name>
    <name type="ORF">F3I17.8</name>
</gene>
<evidence type="ECO:0000250" key="1"/>
<evidence type="ECO:0000255" key="2"/>
<evidence type="ECO:0000269" key="3">
    <source>
    </source>
</evidence>
<evidence type="ECO:0000269" key="4">
    <source>
    </source>
</evidence>
<evidence type="ECO:0000269" key="5">
    <source>
    </source>
</evidence>
<evidence type="ECO:0000269" key="6">
    <source>
    </source>
</evidence>
<evidence type="ECO:0000305" key="7"/>
<comment type="function">
    <text evidence="1 3 4">Acts as a component of the GARP complex that is involved in retrograde transport from early and late endosomes to the trans-Golgi network (TGN). The GARP complex facilitates tethering as well as SNARE complex assembly at the Golgi (By similarity). Required for pollen tube elongation and other polar growth.</text>
</comment>
<comment type="subunit">
    <text evidence="4 5 6">Component of the Golgi-associated retrograde protein (GARP) complex, composed by VPS52, VPS53 and VPS54. Interacts directly with VPS53. Binds to VPS51 (PubMed:24757006).</text>
</comment>
<comment type="subcellular location">
    <subcellularLocation>
        <location>Golgi apparatus</location>
        <location>trans-Golgi network membrane</location>
        <topology>Peripheral membrane protein</topology>
    </subcellularLocation>
    <subcellularLocation>
        <location>Endosome membrane</location>
        <topology>Peripheral membrane protein</topology>
    </subcellularLocation>
    <subcellularLocation>
        <location>Golgi apparatus membrane</location>
        <topology>Peripheral membrane protein</topology>
    </subcellularLocation>
    <text>Localized in the GARP complex in the Golgi and post-Golgi compartments.</text>
</comment>
<comment type="tissue specificity">
    <text evidence="3 4">Mostly expressed in roots and flower buds, and, at low levels, in seeds, whole inflorescence and mature flowers. Also detected in pollen. Present in pollen, buds, leaves, and roots (at protein level).</text>
</comment>
<comment type="developmental stage">
    <text evidence="3 4">In seedlings, expressed in the root apex, mostly in the elongation zone and emerging lateral root primordia, in very young leaves and stipules. In flowers, detected from the earliest stages of flower development, before meiosis and gametogenesis and maintained later. As flower bud size reaches 1.6 to 1.7 mm, confined to male gametophytic tissues and female sporophytic tissues, including ovules. At maturity, accumulates in pollen grains within the anthers. At later postpollination stages, expressed in developing seeds. Accumulates in intracellular compartments in both sporophytic and gametophytic tissues (at protein level).</text>
</comment>
<comment type="disruption phenotype">
    <text evidence="3 4">Lethal when homozygous. In hemizygous plants, male gametophytic mutants characterized by very short pollen tubes. Male-specific transmission defect.</text>
</comment>
<comment type="similarity">
    <text evidence="7">Belongs to the VPS52 family.</text>
</comment>
<comment type="sequence caution" evidence="7">
    <conflict type="erroneous gene model prediction">
        <sequence resource="EMBL-CDS" id="AAG51892"/>
    </conflict>
</comment>
<comment type="sequence caution" evidence="7">
    <conflict type="erroneous initiation">
        <sequence resource="EMBL-CDS" id="BAD94582"/>
    </conflict>
    <text>Truncated N-terminus.</text>
</comment>
<keyword id="KW-0175">Coiled coil</keyword>
<keyword id="KW-0967">Endosome</keyword>
<keyword id="KW-0333">Golgi apparatus</keyword>
<keyword id="KW-0472">Membrane</keyword>
<keyword id="KW-0653">Protein transport</keyword>
<keyword id="KW-1185">Reference proteome</keyword>
<keyword id="KW-0813">Transport</keyword>
<reference key="1">
    <citation type="journal article" date="2004" name="Plant Physiol.">
        <title>The putative Arabidopsis homolog of yeast vps52p is required for pollen tube elongation, localizes to Golgi, and might be involved in vesicle trafficking.</title>
        <authorList>
            <person name="Lobstein E."/>
            <person name="Guyon A."/>
            <person name="Ferault M."/>
            <person name="Twell D."/>
            <person name="Pelletier G."/>
            <person name="Bonhomme S."/>
        </authorList>
    </citation>
    <scope>NUCLEOTIDE SEQUENCE [MRNA]</scope>
    <scope>FUNCTION</scope>
    <scope>DISRUPTION PHENOTYPE</scope>
    <scope>SUBCELLULAR LOCATION</scope>
    <scope>TISSUE SPECIFICITY</scope>
    <scope>DEVELOPMENTAL STAGE</scope>
    <scope>GENE FAMILY</scope>
    <scope>NOMENCLATURE</scope>
</reference>
<reference key="2">
    <citation type="journal article" date="2000" name="Nature">
        <title>Sequence and analysis of chromosome 1 of the plant Arabidopsis thaliana.</title>
        <authorList>
            <person name="Theologis A."/>
            <person name="Ecker J.R."/>
            <person name="Palm C.J."/>
            <person name="Federspiel N.A."/>
            <person name="Kaul S."/>
            <person name="White O."/>
            <person name="Alonso J."/>
            <person name="Altafi H."/>
            <person name="Araujo R."/>
            <person name="Bowman C.L."/>
            <person name="Brooks S.Y."/>
            <person name="Buehler E."/>
            <person name="Chan A."/>
            <person name="Chao Q."/>
            <person name="Chen H."/>
            <person name="Cheuk R.F."/>
            <person name="Chin C.W."/>
            <person name="Chung M.K."/>
            <person name="Conn L."/>
            <person name="Conway A.B."/>
            <person name="Conway A.R."/>
            <person name="Creasy T.H."/>
            <person name="Dewar K."/>
            <person name="Dunn P."/>
            <person name="Etgu P."/>
            <person name="Feldblyum T.V."/>
            <person name="Feng J.-D."/>
            <person name="Fong B."/>
            <person name="Fujii C.Y."/>
            <person name="Gill J.E."/>
            <person name="Goldsmith A.D."/>
            <person name="Haas B."/>
            <person name="Hansen N.F."/>
            <person name="Hughes B."/>
            <person name="Huizar L."/>
            <person name="Hunter J.L."/>
            <person name="Jenkins J."/>
            <person name="Johnson-Hopson C."/>
            <person name="Khan S."/>
            <person name="Khaykin E."/>
            <person name="Kim C.J."/>
            <person name="Koo H.L."/>
            <person name="Kremenetskaia I."/>
            <person name="Kurtz D.B."/>
            <person name="Kwan A."/>
            <person name="Lam B."/>
            <person name="Langin-Hooper S."/>
            <person name="Lee A."/>
            <person name="Lee J.M."/>
            <person name="Lenz C.A."/>
            <person name="Li J.H."/>
            <person name="Li Y.-P."/>
            <person name="Lin X."/>
            <person name="Liu S.X."/>
            <person name="Liu Z.A."/>
            <person name="Luros J.S."/>
            <person name="Maiti R."/>
            <person name="Marziali A."/>
            <person name="Militscher J."/>
            <person name="Miranda M."/>
            <person name="Nguyen M."/>
            <person name="Nierman W.C."/>
            <person name="Osborne B.I."/>
            <person name="Pai G."/>
            <person name="Peterson J."/>
            <person name="Pham P.K."/>
            <person name="Rizzo M."/>
            <person name="Rooney T."/>
            <person name="Rowley D."/>
            <person name="Sakano H."/>
            <person name="Salzberg S.L."/>
            <person name="Schwartz J.R."/>
            <person name="Shinn P."/>
            <person name="Southwick A.M."/>
            <person name="Sun H."/>
            <person name="Tallon L.J."/>
            <person name="Tambunga G."/>
            <person name="Toriumi M.J."/>
            <person name="Town C.D."/>
            <person name="Utterback T."/>
            <person name="Van Aken S."/>
            <person name="Vaysberg M."/>
            <person name="Vysotskaia V.S."/>
            <person name="Walker M."/>
            <person name="Wu D."/>
            <person name="Yu G."/>
            <person name="Fraser C.M."/>
            <person name="Venter J.C."/>
            <person name="Davis R.W."/>
        </authorList>
    </citation>
    <scope>NUCLEOTIDE SEQUENCE [LARGE SCALE GENOMIC DNA]</scope>
    <source>
        <strain>cv. Columbia</strain>
    </source>
</reference>
<reference key="3">
    <citation type="journal article" date="2017" name="Plant J.">
        <title>Araport11: a complete reannotation of the Arabidopsis thaliana reference genome.</title>
        <authorList>
            <person name="Cheng C.Y."/>
            <person name="Krishnakumar V."/>
            <person name="Chan A.P."/>
            <person name="Thibaud-Nissen F."/>
            <person name="Schobel S."/>
            <person name="Town C.D."/>
        </authorList>
    </citation>
    <scope>GENOME REANNOTATION</scope>
    <source>
        <strain>cv. Columbia</strain>
    </source>
</reference>
<reference key="4">
    <citation type="journal article" date="2003" name="Science">
        <title>Empirical analysis of transcriptional activity in the Arabidopsis genome.</title>
        <authorList>
            <person name="Yamada K."/>
            <person name="Lim J."/>
            <person name="Dale J.M."/>
            <person name="Chen H."/>
            <person name="Shinn P."/>
            <person name="Palm C.J."/>
            <person name="Southwick A.M."/>
            <person name="Wu H.C."/>
            <person name="Kim C.J."/>
            <person name="Nguyen M."/>
            <person name="Pham P.K."/>
            <person name="Cheuk R.F."/>
            <person name="Karlin-Newmann G."/>
            <person name="Liu S.X."/>
            <person name="Lam B."/>
            <person name="Sakano H."/>
            <person name="Wu T."/>
            <person name="Yu G."/>
            <person name="Miranda M."/>
            <person name="Quach H.L."/>
            <person name="Tripp M."/>
            <person name="Chang C.H."/>
            <person name="Lee J.M."/>
            <person name="Toriumi M.J."/>
            <person name="Chan M.M."/>
            <person name="Tang C.C."/>
            <person name="Onodera C.S."/>
            <person name="Deng J.M."/>
            <person name="Akiyama K."/>
            <person name="Ansari Y."/>
            <person name="Arakawa T."/>
            <person name="Banh J."/>
            <person name="Banno F."/>
            <person name="Bowser L."/>
            <person name="Brooks S.Y."/>
            <person name="Carninci P."/>
            <person name="Chao Q."/>
            <person name="Choy N."/>
            <person name="Enju A."/>
            <person name="Goldsmith A.D."/>
            <person name="Gurjal M."/>
            <person name="Hansen N.F."/>
            <person name="Hayashizaki Y."/>
            <person name="Johnson-Hopson C."/>
            <person name="Hsuan V.W."/>
            <person name="Iida K."/>
            <person name="Karnes M."/>
            <person name="Khan S."/>
            <person name="Koesema E."/>
            <person name="Ishida J."/>
            <person name="Jiang P.X."/>
            <person name="Jones T."/>
            <person name="Kawai J."/>
            <person name="Kamiya A."/>
            <person name="Meyers C."/>
            <person name="Nakajima M."/>
            <person name="Narusaka M."/>
            <person name="Seki M."/>
            <person name="Sakurai T."/>
            <person name="Satou M."/>
            <person name="Tamse R."/>
            <person name="Vaysberg M."/>
            <person name="Wallender E.K."/>
            <person name="Wong C."/>
            <person name="Yamamura Y."/>
            <person name="Yuan S."/>
            <person name="Shinozaki K."/>
            <person name="Davis R.W."/>
            <person name="Theologis A."/>
            <person name="Ecker J.R."/>
        </authorList>
    </citation>
    <scope>NUCLEOTIDE SEQUENCE [LARGE SCALE MRNA]</scope>
    <source>
        <strain>cv. Columbia</strain>
    </source>
</reference>
<reference key="5">
    <citation type="submission" date="2005-03" db="EMBL/GenBank/DDBJ databases">
        <title>Large-scale analysis of RIKEN Arabidopsis full-length (RAFL) cDNAs.</title>
        <authorList>
            <person name="Totoki Y."/>
            <person name="Seki M."/>
            <person name="Ishida J."/>
            <person name="Nakajima M."/>
            <person name="Enju A."/>
            <person name="Kamiya A."/>
            <person name="Narusaka M."/>
            <person name="Shin-i T."/>
            <person name="Nakagawa M."/>
            <person name="Sakamoto N."/>
            <person name="Oishi K."/>
            <person name="Kohara Y."/>
            <person name="Kobayashi M."/>
            <person name="Toyoda A."/>
            <person name="Sakaki Y."/>
            <person name="Sakurai T."/>
            <person name="Iida K."/>
            <person name="Akiyama K."/>
            <person name="Satou M."/>
            <person name="Toyoda T."/>
            <person name="Konagaya A."/>
            <person name="Carninci P."/>
            <person name="Kawai J."/>
            <person name="Hayashizaki Y."/>
            <person name="Shinozaki K."/>
        </authorList>
    </citation>
    <scope>NUCLEOTIDE SEQUENCE [LARGE SCALE MRNA]</scope>
    <source>
        <strain>cv. Columbia</strain>
    </source>
</reference>
<reference key="6">
    <citation type="journal article" date="2008" name="J. Exp. Bot.">
        <title>The POK/AtVPS52 protein localizes to several distinct post-Golgi compartments in sporophytic and gametophytic cells.</title>
        <authorList>
            <person name="Guermonprez H."/>
            <person name="Smertenko A."/>
            <person name="Crosnier M.-T."/>
            <person name="Durandet M."/>
            <person name="Vrielynck N."/>
            <person name="Guerche P."/>
            <person name="Hussey P.J."/>
            <person name="Satiat-Jeunemaitre B."/>
            <person name="Bonhomme S."/>
        </authorList>
    </citation>
    <scope>FUNCTION</scope>
    <scope>DISRUPTION PHENOTYPE</scope>
    <scope>SUBCELLULAR LOCATION</scope>
    <scope>TISSUE SPECIFICITY</scope>
    <scope>SUBUNIT</scope>
    <scope>DEVELOPMENTAL STAGE</scope>
    <source>
        <strain>cv. Columbia</strain>
        <strain>cv. Wassilewskija</strain>
    </source>
</reference>
<reference key="7">
    <citation type="journal article" date="2009" name="Traffic">
        <title>Fluorescence lifetime imaging of interactions between Golgi tethering factors and small GTPases in plants.</title>
        <authorList>
            <person name="Osterrieder A."/>
            <person name="Carvalho C.M."/>
            <person name="Latijnhouwers M."/>
            <person name="Johansen J.N."/>
            <person name="Stubbs C."/>
            <person name="Botchway S."/>
            <person name="Hawes C."/>
        </authorList>
    </citation>
    <scope>SUBCELLULAR LOCATION</scope>
</reference>
<reference key="8">
    <citation type="journal article" date="2011" name="J. Exp. Bot.">
        <title>Involvement of the Arabidopsis HIT1/AtVPS53 tethering protein homologue in the acclimation of the plasma membrane to heat stress.</title>
        <authorList>
            <person name="Wang L.-C."/>
            <person name="Tsai M.-C."/>
            <person name="Chang K.-Y."/>
            <person name="Fan Y.-S."/>
            <person name="Yeh C.-H."/>
            <person name="Wu S.-J."/>
        </authorList>
    </citation>
    <scope>SUBCELLULAR LOCATION</scope>
    <scope>SUBUNIT</scope>
    <scope>INTERACTION WITH VPS53</scope>
</reference>
<reference key="9">
    <citation type="journal article" date="2014" name="Development">
        <title>Arabidopsis UNHINGED encodes a VPS51 homolog and reveals a role for the GARP complex in leaf shape and vein patterning.</title>
        <authorList>
            <person name="Pahari S."/>
            <person name="Cormark R.D."/>
            <person name="Blackshaw M.T."/>
            <person name="Liu C."/>
            <person name="Erickson J.L."/>
            <person name="Schultz E.A."/>
        </authorList>
    </citation>
    <scope>INTERACTION WITH VPS51</scope>
    <source>
        <strain>cv. Columbia</strain>
    </source>
</reference>
<proteinExistence type="evidence at protein level"/>
<name>VP52A_ARATH</name>
<feature type="chain" id="PRO_0000424843" description="Vacuolar protein sorting-associated protein 52 A">
    <location>
        <begin position="1"/>
        <end position="707"/>
    </location>
</feature>
<feature type="coiled-coil region" evidence="2">
    <location>
        <begin position="181"/>
        <end position="203"/>
    </location>
</feature>
<feature type="sequence conflict" description="In Ref. 1; DAA01355." evidence="7" ref="1">
    <original>D</original>
    <variation>G</variation>
    <location>
        <position position="179"/>
    </location>
</feature>
<feature type="sequence conflict" description="In Ref. 1; DAA01355." evidence="7" ref="1">
    <original>T</original>
    <variation>P</variation>
    <location>
        <position position="583"/>
    </location>
</feature>
<sequence length="707" mass="80938">MSDISIDALGQTMGDFSNHEKLGFDLGAFVGDLAFEEDSGSEDISLEGLQQELEECESDEVVANILSSGDKLREYAKGVENNLRKVELDSIEDYIKESDNLVSLHDQIRDCDSILSQMETLLSGFQEEIGSISSDIKILQEKSMDMGLRLKNRRVAESKLAKFVEDIIVPPKMIDVIVDGEVNEEYMKTLEILSKKLKFVEADQAVKSSKALKDVEPELEKLRQKAISKVYDFIVQKLIALRKPKTNIQILQQSVLLKYKYIISFLKEHGKEVFMDVRAAYIDTMNKVLSAHFRAYIQALEKLQLDIATAYDLIGVETRTTGLFSRAREPLKNRSAVFALGDRIKIIKDIDQPALIPHIAEASSLKYPYEVLFRSLHKLLMDTATSEYMFCDDFFGEESIFYEIFAGPFSVIDEHFNPVLSNCFDAIGLMLMIRIIHHHQLIMSRRRIPCLDSYLDKVNISLWPRFKMVFDSHLSSLRDANIKTLWEDDVHPHYVMRRYAEFTASFIHLNVEYGDGQLDINLERLRMAVDGLILKLAKLFPRPKQQIVFLINNYDMTIAVLKEAGPEGGKIQMHFEEMLKSNTSLFVEELLVEHFSDLIKFVKNRASEDSSLNPERSITIAEVEPLVKDFGSRWKTAIELMDKDIITSFSNFLCGMDILRAALTQLLLYYTRLTDCIKKIDGGSALNRDLVSIQSIMYEIRKYSKTF</sequence>
<dbReference type="EMBL" id="BK000522">
    <property type="protein sequence ID" value="DAA01355.1"/>
    <property type="molecule type" value="mRNA"/>
</dbReference>
<dbReference type="EMBL" id="AC016162">
    <property type="protein sequence ID" value="AAG51892.1"/>
    <property type="status" value="ALT_SEQ"/>
    <property type="molecule type" value="Genomic_DNA"/>
</dbReference>
<dbReference type="EMBL" id="CP002684">
    <property type="protein sequence ID" value="AEE35182.1"/>
    <property type="molecule type" value="Genomic_DNA"/>
</dbReference>
<dbReference type="EMBL" id="AF367286">
    <property type="protein sequence ID" value="AAK56274.1"/>
    <property type="molecule type" value="mRNA"/>
</dbReference>
<dbReference type="EMBL" id="BT004525">
    <property type="protein sequence ID" value="AAO42771.1"/>
    <property type="molecule type" value="mRNA"/>
</dbReference>
<dbReference type="EMBL" id="AK221995">
    <property type="protein sequence ID" value="BAD94582.1"/>
    <property type="status" value="ALT_INIT"/>
    <property type="molecule type" value="mRNA"/>
</dbReference>
<dbReference type="PIR" id="D96737">
    <property type="entry name" value="D96737"/>
</dbReference>
<dbReference type="RefSeq" id="NP_565015.1">
    <property type="nucleotide sequence ID" value="NM_105796.3"/>
</dbReference>
<dbReference type="SMR" id="Q94KD3"/>
<dbReference type="BioGRID" id="28688">
    <property type="interactions" value="4"/>
</dbReference>
<dbReference type="FunCoup" id="Q94KD3">
    <property type="interactions" value="4797"/>
</dbReference>
<dbReference type="STRING" id="3702.Q94KD3"/>
<dbReference type="iPTMnet" id="Q94KD3"/>
<dbReference type="PaxDb" id="3702-AT1G71270.1"/>
<dbReference type="ProteomicsDB" id="242646"/>
<dbReference type="EnsemblPlants" id="AT1G71270.1">
    <property type="protein sequence ID" value="AT1G71270.1"/>
    <property type="gene ID" value="AT1G71270"/>
</dbReference>
<dbReference type="GeneID" id="843468"/>
<dbReference type="Gramene" id="AT1G71270.1">
    <property type="protein sequence ID" value="AT1G71270.1"/>
    <property type="gene ID" value="AT1G71270"/>
</dbReference>
<dbReference type="KEGG" id="ath:AT1G71270"/>
<dbReference type="Araport" id="AT1G71270"/>
<dbReference type="TAIR" id="AT1G71270">
    <property type="gene designation" value="POK"/>
</dbReference>
<dbReference type="eggNOG" id="KOG1961">
    <property type="taxonomic scope" value="Eukaryota"/>
</dbReference>
<dbReference type="HOGENOM" id="CLU_010797_0_1_1"/>
<dbReference type="InParanoid" id="Q94KD3"/>
<dbReference type="OMA" id="IHVVMVE"/>
<dbReference type="PhylomeDB" id="Q94KD3"/>
<dbReference type="PRO" id="PR:Q94KD3"/>
<dbReference type="Proteomes" id="UP000006548">
    <property type="component" value="Chromosome 1"/>
</dbReference>
<dbReference type="ExpressionAtlas" id="Q94KD3">
    <property type="expression patterns" value="baseline and differential"/>
</dbReference>
<dbReference type="GO" id="GO:0012505">
    <property type="term" value="C:endomembrane system"/>
    <property type="evidence" value="ECO:0000314"/>
    <property type="project" value="TAIR"/>
</dbReference>
<dbReference type="GO" id="GO:0010008">
    <property type="term" value="C:endosome membrane"/>
    <property type="evidence" value="ECO:0007669"/>
    <property type="project" value="UniProtKB-SubCell"/>
</dbReference>
<dbReference type="GO" id="GO:0000938">
    <property type="term" value="C:GARP complex"/>
    <property type="evidence" value="ECO:0000314"/>
    <property type="project" value="UniProtKB"/>
</dbReference>
<dbReference type="GO" id="GO:0005794">
    <property type="term" value="C:Golgi apparatus"/>
    <property type="evidence" value="ECO:0000314"/>
    <property type="project" value="TAIR"/>
</dbReference>
<dbReference type="GO" id="GO:0000139">
    <property type="term" value="C:Golgi membrane"/>
    <property type="evidence" value="ECO:0000314"/>
    <property type="project" value="UniProtKB"/>
</dbReference>
<dbReference type="GO" id="GO:0009860">
    <property type="term" value="P:pollen tube growth"/>
    <property type="evidence" value="ECO:0000315"/>
    <property type="project" value="TAIR"/>
</dbReference>
<dbReference type="GO" id="GO:0015031">
    <property type="term" value="P:protein transport"/>
    <property type="evidence" value="ECO:0007669"/>
    <property type="project" value="UniProtKB-KW"/>
</dbReference>
<dbReference type="GO" id="GO:0019953">
    <property type="term" value="P:sexual reproduction"/>
    <property type="evidence" value="ECO:0000315"/>
    <property type="project" value="TAIR"/>
</dbReference>
<dbReference type="InterPro" id="IPR007258">
    <property type="entry name" value="Vps52"/>
</dbReference>
<dbReference type="InterPro" id="IPR048361">
    <property type="entry name" value="Vps52_C"/>
</dbReference>
<dbReference type="InterPro" id="IPR048319">
    <property type="entry name" value="Vps52_CC"/>
</dbReference>
<dbReference type="PANTHER" id="PTHR14190">
    <property type="entry name" value="SUPPRESSOR OF ACTIN MUTATIONS 2/VACUOLAR PROTEIN SORTING 52"/>
    <property type="match status" value="1"/>
</dbReference>
<dbReference type="PANTHER" id="PTHR14190:SF7">
    <property type="entry name" value="VACUOLAR PROTEIN SORTING-ASSOCIATED PROTEIN 52 HOMOLOG"/>
    <property type="match status" value="1"/>
</dbReference>
<dbReference type="Pfam" id="PF20655">
    <property type="entry name" value="Vps52_C"/>
    <property type="match status" value="1"/>
</dbReference>
<dbReference type="Pfam" id="PF04129">
    <property type="entry name" value="Vps52_CC"/>
    <property type="match status" value="1"/>
</dbReference>
<protein>
    <recommendedName>
        <fullName>Vacuolar protein sorting-associated protein 52 A</fullName>
        <shortName>AtVPS52</shortName>
    </recommendedName>
    <alternativeName>
        <fullName>ARE1-like protein POK</fullName>
    </alternativeName>
    <alternativeName>
        <fullName>Protein POKY POLLEN TUBE</fullName>
    </alternativeName>
    <alternativeName>
        <fullName>Protein T-DNA TRANSMISSION DEFECT 8</fullName>
    </alternativeName>
</protein>